<feature type="chain" id="PRO_0000311735" description="Nuclear export protein">
    <location>
        <begin position="1"/>
        <end position="121"/>
    </location>
</feature>
<feature type="short sequence motif" description="Nuclear export signal" evidence="1">
    <location>
        <begin position="12"/>
        <end position="21"/>
    </location>
</feature>
<feature type="short sequence motif" description="Nuclear export signal" evidence="1">
    <location>
        <begin position="85"/>
        <end position="94"/>
    </location>
</feature>
<organism>
    <name type="scientific">Influenza A virus (strain A/Silky Chicken/Hong Kong/YU100/2002 H5N1 genotype X3)</name>
    <dbReference type="NCBI Taxonomy" id="284214"/>
    <lineage>
        <taxon>Viruses</taxon>
        <taxon>Riboviria</taxon>
        <taxon>Orthornavirae</taxon>
        <taxon>Negarnaviricota</taxon>
        <taxon>Polyploviricotina</taxon>
        <taxon>Insthoviricetes</taxon>
        <taxon>Articulavirales</taxon>
        <taxon>Orthomyxoviridae</taxon>
        <taxon>Alphainfluenzavirus</taxon>
        <taxon>Alphainfluenzavirus influenzae</taxon>
        <taxon>Influenza A virus</taxon>
    </lineage>
</organism>
<keyword id="KW-0025">Alternative splicing</keyword>
<keyword id="KW-1048">Host nucleus</keyword>
<keyword id="KW-0945">Host-virus interaction</keyword>
<keyword id="KW-0813">Transport</keyword>
<keyword id="KW-0946">Virion</keyword>
<protein>
    <recommendedName>
        <fullName evidence="1">Nuclear export protein</fullName>
        <shortName evidence="1">NEP</shortName>
    </recommendedName>
    <alternativeName>
        <fullName evidence="1">Non-structural protein 2</fullName>
        <shortName evidence="1">NS2</shortName>
    </alternativeName>
</protein>
<organismHost>
    <name type="scientific">Aves</name>
    <dbReference type="NCBI Taxonomy" id="8782"/>
</organismHost>
<organismHost>
    <name type="scientific">Felis catus</name>
    <name type="common">Cat</name>
    <name type="synonym">Felis silvestris catus</name>
    <dbReference type="NCBI Taxonomy" id="9685"/>
</organismHost>
<organismHost>
    <name type="scientific">Homo sapiens</name>
    <name type="common">Human</name>
    <dbReference type="NCBI Taxonomy" id="9606"/>
</organismHost>
<organismHost>
    <name type="scientific">Panthera pardus</name>
    <name type="common">Leopard</name>
    <name type="synonym">Felis pardus</name>
    <dbReference type="NCBI Taxonomy" id="9691"/>
</organismHost>
<organismHost>
    <name type="scientific">Panthera tigris</name>
    <name type="common">Tiger</name>
    <dbReference type="NCBI Taxonomy" id="9694"/>
</organismHost>
<organismHost>
    <name type="scientific">Sus scrofa</name>
    <name type="common">Pig</name>
    <dbReference type="NCBI Taxonomy" id="9823"/>
</organismHost>
<dbReference type="EMBL" id="AY651567">
    <property type="protein sequence ID" value="AAT73422.1"/>
    <property type="molecule type" value="Genomic_RNA"/>
</dbReference>
<dbReference type="SMR" id="Q6DP65"/>
<dbReference type="GO" id="GO:0042025">
    <property type="term" value="C:host cell nucleus"/>
    <property type="evidence" value="ECO:0007669"/>
    <property type="project" value="UniProtKB-SubCell"/>
</dbReference>
<dbReference type="GO" id="GO:0044423">
    <property type="term" value="C:virion component"/>
    <property type="evidence" value="ECO:0007669"/>
    <property type="project" value="UniProtKB-UniRule"/>
</dbReference>
<dbReference type="GO" id="GO:0039675">
    <property type="term" value="P:exit of virus from host cell nucleus through nuclear pore"/>
    <property type="evidence" value="ECO:0007669"/>
    <property type="project" value="UniProtKB-UniRule"/>
</dbReference>
<dbReference type="Gene3D" id="1.10.287.230">
    <property type="match status" value="1"/>
</dbReference>
<dbReference type="Gene3D" id="1.10.287.10">
    <property type="entry name" value="S15/NS1, RNA-binding"/>
    <property type="match status" value="1"/>
</dbReference>
<dbReference type="HAMAP" id="MF_04067">
    <property type="entry name" value="INFV_NEP"/>
    <property type="match status" value="1"/>
</dbReference>
<dbReference type="InterPro" id="IPR000968">
    <property type="entry name" value="Flu_NS2"/>
</dbReference>
<dbReference type="Pfam" id="PF00601">
    <property type="entry name" value="Flu_NS2"/>
    <property type="match status" value="1"/>
</dbReference>
<dbReference type="SUPFAM" id="SSF101156">
    <property type="entry name" value="Nonstructural protein ns2, Nep, M1-binding domain"/>
    <property type="match status" value="1"/>
</dbReference>
<sequence length="121" mass="14306">MDSNTVSSFQDILMRMSKMQLGSSSEDLNGMITQFESLKLYRDSLGEAVMRVGDLHSLQSRNGKWREQLSQKFEEIRWLIEEVRHRLKITENSFEQITFMQALQLLLEVEQEIRTFSFQLI</sequence>
<gene>
    <name evidence="1" type="primary">NS</name>
</gene>
<name>NEP_I02A4</name>
<evidence type="ECO:0000255" key="1">
    <source>
        <dbReference type="HAMAP-Rule" id="MF_04067"/>
    </source>
</evidence>
<comment type="function">
    <text evidence="1">Mediates the nuclear export of encapsidated genomic RNAs (ribonucleoproteins, RNPs). Acts as an adapter between viral RNPs complexes and the nuclear export machinery of the cell. Possesses no intrinsic RNA-binding activity, but includes a C-terminal M1-binding domain. This domain is believed to allow recognition of RNPs bound to the protein M1. Since protein M1 is not available in large quantities before late stages of infection, such an indirect recognition mechanism probably ensures that genomic RNPs are not exported from the host nucleus until sufficient quantities of viral mRNA and progeny genomic RNA have been synthesized. Furthermore, the RNPs enter the host cytoplasm only when associated with the M1 protein that is necessary to guide them to the plasma membrane. May down-regulate viral RNA synthesis when overproduced.</text>
</comment>
<comment type="subunit">
    <text evidence="1">Interacts with protein M1. May interact with host nucleoporin RAB/HRB and exportin XPO1/CRM1.</text>
</comment>
<comment type="subcellular location">
    <subcellularLocation>
        <location evidence="1">Virion</location>
    </subcellularLocation>
    <subcellularLocation>
        <location evidence="1">Host nucleus</location>
    </subcellularLocation>
</comment>
<comment type="alternative products">
    <event type="alternative splicing"/>
    <isoform>
        <id>Q6DP65-1</id>
        <name>NEP</name>
        <name>NS2</name>
        <sequence type="displayed"/>
    </isoform>
    <isoform>
        <id>Q6DP64-1</id>
        <name>NS1</name>
        <sequence type="external"/>
    </isoform>
</comment>
<comment type="miscellaneous">
    <text>Average number present in a viral particle is estimated to be 130-200 molecules.</text>
</comment>
<comment type="similarity">
    <text evidence="1">Belongs to the influenza viruses NEP family.</text>
</comment>
<proteinExistence type="inferred from homology"/>
<reference key="1">
    <citation type="journal article" date="2004" name="Nature">
        <title>Genesis of a highly pathogenic and potentially pandemic H5N1 influenza virus in eastern Asia.</title>
        <authorList>
            <person name="Li K.S."/>
            <person name="Guan Y."/>
            <person name="Wang J."/>
            <person name="Smith G.J.D."/>
            <person name="Xu K.M."/>
            <person name="Duan L."/>
            <person name="Rahardjo A.P."/>
            <person name="Puthavathana P."/>
            <person name="Buranathai C."/>
            <person name="Nguyen T.D."/>
            <person name="Estoepangestie A.T.S."/>
            <person name="Chaisingh A."/>
            <person name="Auewarakul P."/>
            <person name="Long H.T."/>
            <person name="Hanh N.T.H."/>
            <person name="Webby R.J."/>
            <person name="Poon L.L.M."/>
            <person name="Chen H."/>
            <person name="Shortridge K.F."/>
            <person name="Yuen K.Y."/>
            <person name="Webster R.G."/>
            <person name="Peiris J.S.M."/>
        </authorList>
    </citation>
    <scope>NUCLEOTIDE SEQUENCE [GENOMIC RNA]</scope>
</reference>
<accession>Q6DP65</accession>